<protein>
    <recommendedName>
        <fullName>Uncharacterized ABC transporter permease protein YvrB</fullName>
    </recommendedName>
</protein>
<gene>
    <name type="primary">yvrB</name>
    <name type="ordered locus">BSU33170</name>
</gene>
<proteinExistence type="inferred from homology"/>
<evidence type="ECO:0000250" key="1"/>
<evidence type="ECO:0000255" key="2"/>
<evidence type="ECO:0000305" key="3"/>
<dbReference type="EMBL" id="AJ223978">
    <property type="protein sequence ID" value="CAA11736.1"/>
    <property type="molecule type" value="Genomic_DNA"/>
</dbReference>
<dbReference type="EMBL" id="AL009126">
    <property type="protein sequence ID" value="CAB15307.1"/>
    <property type="molecule type" value="Genomic_DNA"/>
</dbReference>
<dbReference type="PIR" id="F70046">
    <property type="entry name" value="F70046"/>
</dbReference>
<dbReference type="RefSeq" id="NP_391197.1">
    <property type="nucleotide sequence ID" value="NC_000964.3"/>
</dbReference>
<dbReference type="RefSeq" id="WP_009968147.1">
    <property type="nucleotide sequence ID" value="NZ_OZ025638.1"/>
</dbReference>
<dbReference type="SMR" id="O34451"/>
<dbReference type="FunCoup" id="O34451">
    <property type="interactions" value="283"/>
</dbReference>
<dbReference type="STRING" id="224308.BSU33170"/>
<dbReference type="PaxDb" id="224308-BSU33170"/>
<dbReference type="EnsemblBacteria" id="CAB15307">
    <property type="protein sequence ID" value="CAB15307"/>
    <property type="gene ID" value="BSU_33170"/>
</dbReference>
<dbReference type="GeneID" id="938583"/>
<dbReference type="KEGG" id="bsu:BSU33170"/>
<dbReference type="PATRIC" id="fig|224308.179.peg.3596"/>
<dbReference type="eggNOG" id="COG0609">
    <property type="taxonomic scope" value="Bacteria"/>
</dbReference>
<dbReference type="InParanoid" id="O34451"/>
<dbReference type="OrthoDB" id="9811721at2"/>
<dbReference type="PhylomeDB" id="O34451"/>
<dbReference type="BioCyc" id="BSUB:BSU33170-MONOMER"/>
<dbReference type="Proteomes" id="UP000001570">
    <property type="component" value="Chromosome"/>
</dbReference>
<dbReference type="GO" id="GO:0005886">
    <property type="term" value="C:plasma membrane"/>
    <property type="evidence" value="ECO:0000318"/>
    <property type="project" value="GO_Central"/>
</dbReference>
<dbReference type="GO" id="GO:0022857">
    <property type="term" value="F:transmembrane transporter activity"/>
    <property type="evidence" value="ECO:0000318"/>
    <property type="project" value="GO_Central"/>
</dbReference>
<dbReference type="GO" id="GO:0033214">
    <property type="term" value="P:siderophore-dependent iron import into cell"/>
    <property type="evidence" value="ECO:0000318"/>
    <property type="project" value="GO_Central"/>
</dbReference>
<dbReference type="CDD" id="cd06550">
    <property type="entry name" value="TM_ABC_iron-siderophores_like"/>
    <property type="match status" value="1"/>
</dbReference>
<dbReference type="FunFam" id="1.10.3470.10:FF:000001">
    <property type="entry name" value="Vitamin B12 ABC transporter permease BtuC"/>
    <property type="match status" value="1"/>
</dbReference>
<dbReference type="Gene3D" id="1.10.3470.10">
    <property type="entry name" value="ABC transporter involved in vitamin B12 uptake, BtuC"/>
    <property type="match status" value="1"/>
</dbReference>
<dbReference type="InterPro" id="IPR037294">
    <property type="entry name" value="ABC_BtuC-like"/>
</dbReference>
<dbReference type="InterPro" id="IPR000522">
    <property type="entry name" value="ABC_transptr_permease_BtuC"/>
</dbReference>
<dbReference type="PANTHER" id="PTHR30472:SF25">
    <property type="entry name" value="ABC TRANSPORTER PERMEASE PROTEIN MJ0876-RELATED"/>
    <property type="match status" value="1"/>
</dbReference>
<dbReference type="PANTHER" id="PTHR30472">
    <property type="entry name" value="FERRIC ENTEROBACTIN TRANSPORT SYSTEM PERMEASE PROTEIN"/>
    <property type="match status" value="1"/>
</dbReference>
<dbReference type="Pfam" id="PF01032">
    <property type="entry name" value="FecCD"/>
    <property type="match status" value="1"/>
</dbReference>
<dbReference type="SUPFAM" id="SSF81345">
    <property type="entry name" value="ABC transporter involved in vitamin B12 uptake, BtuC"/>
    <property type="match status" value="1"/>
</dbReference>
<organism>
    <name type="scientific">Bacillus subtilis (strain 168)</name>
    <dbReference type="NCBI Taxonomy" id="224308"/>
    <lineage>
        <taxon>Bacteria</taxon>
        <taxon>Bacillati</taxon>
        <taxon>Bacillota</taxon>
        <taxon>Bacilli</taxon>
        <taxon>Bacillales</taxon>
        <taxon>Bacillaceae</taxon>
        <taxon>Bacillus</taxon>
    </lineage>
</organism>
<comment type="function">
    <text evidence="1">Probably part of an ABC transporter complex. Probably responsible for the translocation of the substrate across the membrane (By similarity).</text>
</comment>
<comment type="subunit">
    <text evidence="3">The complex is composed of two ATP-binding proteins (YvrA), two transmembrane proteins (YvrB) and a solute-binding protein (YvrC).</text>
</comment>
<comment type="subcellular location">
    <subcellularLocation>
        <location evidence="3">Cell membrane</location>
        <topology evidence="3">Multi-pass membrane protein</topology>
    </subcellularLocation>
</comment>
<comment type="similarity">
    <text evidence="3">Belongs to the binding-protein-dependent transport system permease family. FecCD subfamily.</text>
</comment>
<name>YVRB_BACSU</name>
<keyword id="KW-1003">Cell membrane</keyword>
<keyword id="KW-0472">Membrane</keyword>
<keyword id="KW-1185">Reference proteome</keyword>
<keyword id="KW-0812">Transmembrane</keyword>
<keyword id="KW-1133">Transmembrane helix</keyword>
<keyword id="KW-0813">Transport</keyword>
<reference key="1">
    <citation type="journal article" date="1998" name="Microbiology">
        <title>The yvsA-yvqA (293 degrees - 289 degrees) region of the Bacillus subtilis chromosome containing genes involved in metal ion uptake and a putative sigma factor.</title>
        <authorList>
            <person name="Wipat A."/>
            <person name="Brignell C.S."/>
            <person name="Guy J.B."/>
            <person name="Rose M."/>
            <person name="Emmerson P.T."/>
            <person name="Harwood C.R."/>
        </authorList>
    </citation>
    <scope>NUCLEOTIDE SEQUENCE [GENOMIC DNA]</scope>
    <source>
        <strain>168</strain>
    </source>
</reference>
<reference key="2">
    <citation type="journal article" date="1997" name="Nature">
        <title>The complete genome sequence of the Gram-positive bacterium Bacillus subtilis.</title>
        <authorList>
            <person name="Kunst F."/>
            <person name="Ogasawara N."/>
            <person name="Moszer I."/>
            <person name="Albertini A.M."/>
            <person name="Alloni G."/>
            <person name="Azevedo V."/>
            <person name="Bertero M.G."/>
            <person name="Bessieres P."/>
            <person name="Bolotin A."/>
            <person name="Borchert S."/>
            <person name="Borriss R."/>
            <person name="Boursier L."/>
            <person name="Brans A."/>
            <person name="Braun M."/>
            <person name="Brignell S.C."/>
            <person name="Bron S."/>
            <person name="Brouillet S."/>
            <person name="Bruschi C.V."/>
            <person name="Caldwell B."/>
            <person name="Capuano V."/>
            <person name="Carter N.M."/>
            <person name="Choi S.-K."/>
            <person name="Codani J.-J."/>
            <person name="Connerton I.F."/>
            <person name="Cummings N.J."/>
            <person name="Daniel R.A."/>
            <person name="Denizot F."/>
            <person name="Devine K.M."/>
            <person name="Duesterhoeft A."/>
            <person name="Ehrlich S.D."/>
            <person name="Emmerson P.T."/>
            <person name="Entian K.-D."/>
            <person name="Errington J."/>
            <person name="Fabret C."/>
            <person name="Ferrari E."/>
            <person name="Foulger D."/>
            <person name="Fritz C."/>
            <person name="Fujita M."/>
            <person name="Fujita Y."/>
            <person name="Fuma S."/>
            <person name="Galizzi A."/>
            <person name="Galleron N."/>
            <person name="Ghim S.-Y."/>
            <person name="Glaser P."/>
            <person name="Goffeau A."/>
            <person name="Golightly E.J."/>
            <person name="Grandi G."/>
            <person name="Guiseppi G."/>
            <person name="Guy B.J."/>
            <person name="Haga K."/>
            <person name="Haiech J."/>
            <person name="Harwood C.R."/>
            <person name="Henaut A."/>
            <person name="Hilbert H."/>
            <person name="Holsappel S."/>
            <person name="Hosono S."/>
            <person name="Hullo M.-F."/>
            <person name="Itaya M."/>
            <person name="Jones L.-M."/>
            <person name="Joris B."/>
            <person name="Karamata D."/>
            <person name="Kasahara Y."/>
            <person name="Klaerr-Blanchard M."/>
            <person name="Klein C."/>
            <person name="Kobayashi Y."/>
            <person name="Koetter P."/>
            <person name="Koningstein G."/>
            <person name="Krogh S."/>
            <person name="Kumano M."/>
            <person name="Kurita K."/>
            <person name="Lapidus A."/>
            <person name="Lardinois S."/>
            <person name="Lauber J."/>
            <person name="Lazarevic V."/>
            <person name="Lee S.-M."/>
            <person name="Levine A."/>
            <person name="Liu H."/>
            <person name="Masuda S."/>
            <person name="Mauel C."/>
            <person name="Medigue C."/>
            <person name="Medina N."/>
            <person name="Mellado R.P."/>
            <person name="Mizuno M."/>
            <person name="Moestl D."/>
            <person name="Nakai S."/>
            <person name="Noback M."/>
            <person name="Noone D."/>
            <person name="O'Reilly M."/>
            <person name="Ogawa K."/>
            <person name="Ogiwara A."/>
            <person name="Oudega B."/>
            <person name="Park S.-H."/>
            <person name="Parro V."/>
            <person name="Pohl T.M."/>
            <person name="Portetelle D."/>
            <person name="Porwollik S."/>
            <person name="Prescott A.M."/>
            <person name="Presecan E."/>
            <person name="Pujic P."/>
            <person name="Purnelle B."/>
            <person name="Rapoport G."/>
            <person name="Rey M."/>
            <person name="Reynolds S."/>
            <person name="Rieger M."/>
            <person name="Rivolta C."/>
            <person name="Rocha E."/>
            <person name="Roche B."/>
            <person name="Rose M."/>
            <person name="Sadaie Y."/>
            <person name="Sato T."/>
            <person name="Scanlan E."/>
            <person name="Schleich S."/>
            <person name="Schroeter R."/>
            <person name="Scoffone F."/>
            <person name="Sekiguchi J."/>
            <person name="Sekowska A."/>
            <person name="Seror S.J."/>
            <person name="Serror P."/>
            <person name="Shin B.-S."/>
            <person name="Soldo B."/>
            <person name="Sorokin A."/>
            <person name="Tacconi E."/>
            <person name="Takagi T."/>
            <person name="Takahashi H."/>
            <person name="Takemaru K."/>
            <person name="Takeuchi M."/>
            <person name="Tamakoshi A."/>
            <person name="Tanaka T."/>
            <person name="Terpstra P."/>
            <person name="Tognoni A."/>
            <person name="Tosato V."/>
            <person name="Uchiyama S."/>
            <person name="Vandenbol M."/>
            <person name="Vannier F."/>
            <person name="Vassarotti A."/>
            <person name="Viari A."/>
            <person name="Wambutt R."/>
            <person name="Wedler E."/>
            <person name="Wedler H."/>
            <person name="Weitzenegger T."/>
            <person name="Winters P."/>
            <person name="Wipat A."/>
            <person name="Yamamoto H."/>
            <person name="Yamane K."/>
            <person name="Yasumoto K."/>
            <person name="Yata K."/>
            <person name="Yoshida K."/>
            <person name="Yoshikawa H.-F."/>
            <person name="Zumstein E."/>
            <person name="Yoshikawa H."/>
            <person name="Danchin A."/>
        </authorList>
    </citation>
    <scope>NUCLEOTIDE SEQUENCE [LARGE SCALE GENOMIC DNA]</scope>
    <source>
        <strain>168</strain>
    </source>
</reference>
<feature type="chain" id="PRO_0000377713" description="Uncharacterized ABC transporter permease protein YvrB">
    <location>
        <begin position="1"/>
        <end position="353"/>
    </location>
</feature>
<feature type="transmembrane region" description="Helical" evidence="2">
    <location>
        <begin position="16"/>
        <end position="36"/>
    </location>
</feature>
<feature type="transmembrane region" description="Helical" evidence="2">
    <location>
        <begin position="77"/>
        <end position="97"/>
    </location>
</feature>
<feature type="transmembrane region" description="Helical" evidence="2">
    <location>
        <begin position="106"/>
        <end position="128"/>
    </location>
</feature>
<feature type="transmembrane region" description="Helical" evidence="2">
    <location>
        <begin position="140"/>
        <end position="160"/>
    </location>
</feature>
<feature type="transmembrane region" description="Helical" evidence="2">
    <location>
        <begin position="167"/>
        <end position="187"/>
    </location>
</feature>
<feature type="transmembrane region" description="Helical" evidence="2">
    <location>
        <begin position="208"/>
        <end position="228"/>
    </location>
</feature>
<feature type="transmembrane region" description="Helical" evidence="2">
    <location>
        <begin position="263"/>
        <end position="283"/>
    </location>
</feature>
<feature type="transmembrane region" description="Helical" evidence="2">
    <location>
        <begin position="296"/>
        <end position="316"/>
    </location>
</feature>
<feature type="transmembrane region" description="Helical" evidence="2">
    <location>
        <begin position="323"/>
        <end position="343"/>
    </location>
</feature>
<accession>O34451</accession>
<accession>Q7B2K0</accession>
<sequence length="353" mass="37497">MRKAFTRIRLRNNRYAAYIIGFSFLAVSIILGISCGSLHIPIPAVFRVFWHQGFGGSIGSDDPMYTNIMMNIRLPRVVLAALVGAALSIAGAAFQGLLKNPLADPYTLGVSSGASVGAVVTLFLGLHLPVIGGFTLPVLSVAAALATMAAVLFFSRLVHASMSVSTLILTGVITNSFLGAFISLIIALTGDNLLPIVHWLLGSVSMRGWSYVILFLPFFLLGTILLIINGRELNVMTYGEDKAKLLGVSVQQRKMMILIAGSLLTGSAVAVSGTIGFVGLVIPHITRLLWGTDHRHLLPLSALLGAGFLVLADLLSRTIIEPIELPIGIITSLAGAPVFALILIRQHRGGRSL</sequence>